<name>GALRD_OCEIH</name>
<keyword id="KW-0002">3D-structure</keyword>
<keyword id="KW-0456">Lyase</keyword>
<keyword id="KW-0460">Magnesium</keyword>
<keyword id="KW-0479">Metal-binding</keyword>
<keyword id="KW-1185">Reference proteome</keyword>
<gene>
    <name type="ordered locus">OB2843</name>
</gene>
<feature type="chain" id="PRO_0000429329" description="Galactarate dehydratase (D-threo-forming)">
    <location>
        <begin position="1"/>
        <end position="391"/>
    </location>
</feature>
<feature type="active site" description="Proton donor" evidence="1">
    <location>
        <position position="90"/>
    </location>
</feature>
<feature type="active site" description="Proton acceptor" evidence="1">
    <location>
        <position position="164"/>
    </location>
</feature>
<feature type="binding site">
    <location>
        <position position="15"/>
    </location>
    <ligand>
        <name>substrate</name>
    </ligand>
</feature>
<feature type="binding site">
    <location>
        <position position="42"/>
    </location>
    <ligand>
        <name>Mg(2+)</name>
        <dbReference type="ChEBI" id="CHEBI:18420"/>
        <label>1</label>
    </ligand>
</feature>
<feature type="binding site">
    <location>
        <position position="45"/>
    </location>
    <ligand>
        <name>Mg(2+)</name>
        <dbReference type="ChEBI" id="CHEBI:18420"/>
        <label>1</label>
    </ligand>
</feature>
<feature type="binding site">
    <location>
        <position position="89"/>
    </location>
    <ligand>
        <name>substrate</name>
    </ligand>
</feature>
<feature type="binding site">
    <location>
        <position position="193"/>
    </location>
    <ligand>
        <name>Mg(2+)</name>
        <dbReference type="ChEBI" id="CHEBI:18420"/>
        <label>2</label>
    </ligand>
</feature>
<feature type="binding site">
    <location>
        <position position="221"/>
    </location>
    <ligand>
        <name>Mg(2+)</name>
        <dbReference type="ChEBI" id="CHEBI:18420"/>
        <label>2</label>
    </ligand>
</feature>
<feature type="binding site">
    <location>
        <position position="246"/>
    </location>
    <ligand>
        <name>Mg(2+)</name>
        <dbReference type="ChEBI" id="CHEBI:18420"/>
        <label>2</label>
    </ligand>
</feature>
<feature type="binding site">
    <location>
        <position position="296"/>
    </location>
    <ligand>
        <name>substrate</name>
    </ligand>
</feature>
<feature type="binding site">
    <location>
        <position position="297"/>
    </location>
    <ligand>
        <name>Mg(2+)</name>
        <dbReference type="ChEBI" id="CHEBI:18420"/>
        <label>1</label>
    </ligand>
</feature>
<feature type="binding site">
    <location>
        <position position="385"/>
    </location>
    <ligand>
        <name>substrate</name>
    </ligand>
</feature>
<feature type="site" description="Increases basicity of active site Tyr">
    <location>
        <position position="162"/>
    </location>
</feature>
<feature type="mutagenesis site" description="Loss of activity." evidence="1">
    <original>H</original>
    <variation>Q</variation>
    <location>
        <position position="45"/>
    </location>
</feature>
<feature type="mutagenesis site" description="3550-fold reduction in catalytic efficiency." evidence="1">
    <original>Y</original>
    <variation>F</variation>
    <location>
        <position position="90"/>
    </location>
</feature>
<feature type="mutagenesis site" description="17000-fold reduction in catalytic efficiency." evidence="1">
    <original>R</original>
    <variation>N</variation>
    <location>
        <position position="162"/>
    </location>
</feature>
<feature type="mutagenesis site" description="Loss of activity." evidence="1">
    <original>Y</original>
    <variation>F</variation>
    <location>
        <position position="164"/>
    </location>
</feature>
<feature type="strand" evidence="4">
    <location>
        <begin position="3"/>
        <end position="15"/>
    </location>
</feature>
<feature type="strand" evidence="4">
    <location>
        <begin position="20"/>
        <end position="30"/>
    </location>
</feature>
<feature type="strand" evidence="4">
    <location>
        <begin position="35"/>
        <end position="40"/>
    </location>
</feature>
<feature type="strand" evidence="4">
    <location>
        <begin position="44"/>
        <end position="48"/>
    </location>
</feature>
<feature type="helix" evidence="4">
    <location>
        <begin position="53"/>
        <end position="64"/>
    </location>
</feature>
<feature type="helix" evidence="4">
    <location>
        <begin position="72"/>
        <end position="82"/>
    </location>
</feature>
<feature type="helix" evidence="4">
    <location>
        <begin position="92"/>
        <end position="112"/>
    </location>
</feature>
<feature type="helix" evidence="4">
    <location>
        <begin position="116"/>
        <end position="119"/>
    </location>
</feature>
<feature type="strand" evidence="4">
    <location>
        <begin position="126"/>
        <end position="130"/>
    </location>
</feature>
<feature type="strand" evidence="4">
    <location>
        <begin position="132"/>
        <end position="134"/>
    </location>
</feature>
<feature type="helix" evidence="4">
    <location>
        <begin position="142"/>
        <end position="155"/>
    </location>
</feature>
<feature type="strand" evidence="4">
    <location>
        <begin position="160"/>
        <end position="164"/>
    </location>
</feature>
<feature type="helix" evidence="4">
    <location>
        <begin position="169"/>
        <end position="183"/>
    </location>
</feature>
<feature type="helix" evidence="4">
    <location>
        <begin position="184"/>
        <end position="186"/>
    </location>
</feature>
<feature type="strand" evidence="4">
    <location>
        <begin position="188"/>
        <end position="193"/>
    </location>
</feature>
<feature type="helix" evidence="4">
    <location>
        <begin position="200"/>
        <end position="210"/>
    </location>
</feature>
<feature type="strand" evidence="4">
    <location>
        <begin position="219"/>
        <end position="221"/>
    </location>
</feature>
<feature type="helix" evidence="4">
    <location>
        <begin position="229"/>
        <end position="238"/>
    </location>
</feature>
<feature type="strand" evidence="4">
    <location>
        <begin position="243"/>
        <end position="246"/>
    </location>
</feature>
<feature type="helix" evidence="4">
    <location>
        <begin position="250"/>
        <end position="259"/>
    </location>
</feature>
<feature type="strand" evidence="4">
    <location>
        <begin position="263"/>
        <end position="267"/>
    </location>
</feature>
<feature type="helix" evidence="4">
    <location>
        <begin position="269"/>
        <end position="272"/>
    </location>
</feature>
<feature type="helix" evidence="4">
    <location>
        <begin position="275"/>
        <end position="287"/>
    </location>
</feature>
<feature type="strand" evidence="4">
    <location>
        <begin position="291"/>
        <end position="294"/>
    </location>
</feature>
<feature type="helix" evidence="4">
    <location>
        <begin position="301"/>
        <end position="311"/>
    </location>
</feature>
<feature type="helix" evidence="4">
    <location>
        <begin position="325"/>
        <end position="328"/>
    </location>
</feature>
<feature type="strand" evidence="4">
    <location>
        <begin position="333"/>
        <end position="336"/>
    </location>
</feature>
<feature type="strand" evidence="4">
    <location>
        <begin position="344"/>
        <end position="346"/>
    </location>
</feature>
<feature type="strand" evidence="4">
    <location>
        <begin position="352"/>
        <end position="354"/>
    </location>
</feature>
<feature type="helix" evidence="4">
    <location>
        <begin position="361"/>
        <end position="366"/>
    </location>
</feature>
<feature type="helix" evidence="5">
    <location>
        <begin position="379"/>
        <end position="384"/>
    </location>
</feature>
<dbReference type="EC" id="4.2.1.158" evidence="1"/>
<dbReference type="EMBL" id="BA000028">
    <property type="protein sequence ID" value="BAC14799.1"/>
    <property type="molecule type" value="Genomic_DNA"/>
</dbReference>
<dbReference type="RefSeq" id="WP_011067240.1">
    <property type="nucleotide sequence ID" value="NC_004193.1"/>
</dbReference>
<dbReference type="PDB" id="2OQY">
    <property type="method" value="X-ray"/>
    <property type="resolution" value="2.00 A"/>
    <property type="chains" value="A/B/C/D/E/F/G/H=1-391"/>
</dbReference>
<dbReference type="PDB" id="3ES7">
    <property type="method" value="X-ray"/>
    <property type="resolution" value="1.90 A"/>
    <property type="chains" value="A/B=1-391"/>
</dbReference>
<dbReference type="PDB" id="3ES8">
    <property type="method" value="X-ray"/>
    <property type="resolution" value="2.20 A"/>
    <property type="chains" value="A/B/C/D/E/F/G/H=1-391"/>
</dbReference>
<dbReference type="PDB" id="3FYY">
    <property type="method" value="X-ray"/>
    <property type="resolution" value="1.80 A"/>
    <property type="chains" value="A/B=1-391"/>
</dbReference>
<dbReference type="PDB" id="3GD6">
    <property type="method" value="X-ray"/>
    <property type="resolution" value="1.60 A"/>
    <property type="chains" value="A=1-391"/>
</dbReference>
<dbReference type="PDB" id="3HPF">
    <property type="method" value="X-ray"/>
    <property type="resolution" value="1.80 A"/>
    <property type="chains" value="A/B=1-391"/>
</dbReference>
<dbReference type="PDBsum" id="2OQY"/>
<dbReference type="PDBsum" id="3ES7"/>
<dbReference type="PDBsum" id="3ES8"/>
<dbReference type="PDBsum" id="3FYY"/>
<dbReference type="PDBsum" id="3GD6"/>
<dbReference type="PDBsum" id="3HPF"/>
<dbReference type="SMR" id="Q8EMJ9"/>
<dbReference type="STRING" id="221109.gene:10735095"/>
<dbReference type="DNASU" id="1017035"/>
<dbReference type="KEGG" id="oih:OB2843"/>
<dbReference type="eggNOG" id="COG4948">
    <property type="taxonomic scope" value="Bacteria"/>
</dbReference>
<dbReference type="HOGENOM" id="CLU_705642_0_0_9"/>
<dbReference type="OrthoDB" id="9775391at2"/>
<dbReference type="PhylomeDB" id="Q8EMJ9"/>
<dbReference type="BioCyc" id="MetaCyc:MONOMER-19186"/>
<dbReference type="BRENDA" id="4.2.1.158">
    <property type="organism ID" value="4380"/>
</dbReference>
<dbReference type="EvolutionaryTrace" id="Q8EMJ9"/>
<dbReference type="Proteomes" id="UP000000822">
    <property type="component" value="Chromosome"/>
</dbReference>
<dbReference type="GO" id="GO:0016829">
    <property type="term" value="F:lyase activity"/>
    <property type="evidence" value="ECO:0007669"/>
    <property type="project" value="UniProtKB-KW"/>
</dbReference>
<dbReference type="GO" id="GO:0046872">
    <property type="term" value="F:metal ion binding"/>
    <property type="evidence" value="ECO:0007669"/>
    <property type="project" value="UniProtKB-KW"/>
</dbReference>
<dbReference type="CDD" id="cd00308">
    <property type="entry name" value="enolase_like"/>
    <property type="match status" value="1"/>
</dbReference>
<dbReference type="Gene3D" id="3.20.20.120">
    <property type="entry name" value="Enolase-like C-terminal domain"/>
    <property type="match status" value="1"/>
</dbReference>
<dbReference type="Gene3D" id="3.30.390.10">
    <property type="entry name" value="Enolase-like, N-terminal domain"/>
    <property type="match status" value="1"/>
</dbReference>
<dbReference type="InterPro" id="IPR034593">
    <property type="entry name" value="DgoD-like"/>
</dbReference>
<dbReference type="InterPro" id="IPR036849">
    <property type="entry name" value="Enolase-like_C_sf"/>
</dbReference>
<dbReference type="InterPro" id="IPR029017">
    <property type="entry name" value="Enolase-like_N"/>
</dbReference>
<dbReference type="InterPro" id="IPR029065">
    <property type="entry name" value="Enolase_C-like"/>
</dbReference>
<dbReference type="InterPro" id="IPR033977">
    <property type="entry name" value="Galactarate_dehydratase_2"/>
</dbReference>
<dbReference type="InterPro" id="IPR013342">
    <property type="entry name" value="Mandelate_racemase_C"/>
</dbReference>
<dbReference type="InterPro" id="IPR013341">
    <property type="entry name" value="Mandelate_racemase_N_dom"/>
</dbReference>
<dbReference type="PANTHER" id="PTHR48080">
    <property type="entry name" value="D-GALACTONATE DEHYDRATASE-RELATED"/>
    <property type="match status" value="1"/>
</dbReference>
<dbReference type="PANTHER" id="PTHR48080:SF3">
    <property type="entry name" value="ENOLASE SUPERFAMILY MEMBER DDB_G0284701"/>
    <property type="match status" value="1"/>
</dbReference>
<dbReference type="Pfam" id="PF13378">
    <property type="entry name" value="MR_MLE_C"/>
    <property type="match status" value="1"/>
</dbReference>
<dbReference type="Pfam" id="PF02746">
    <property type="entry name" value="MR_MLE_N"/>
    <property type="match status" value="1"/>
</dbReference>
<dbReference type="SFLD" id="SFLDG00309">
    <property type="entry name" value="galactarate_dehydratase"/>
    <property type="match status" value="1"/>
</dbReference>
<dbReference type="SFLD" id="SFLDF00162">
    <property type="entry name" value="galactarate_dehydratase_2"/>
    <property type="match status" value="1"/>
</dbReference>
<dbReference type="SMART" id="SM00922">
    <property type="entry name" value="MR_MLE"/>
    <property type="match status" value="1"/>
</dbReference>
<dbReference type="SUPFAM" id="SSF51604">
    <property type="entry name" value="Enolase C-terminal domain-like"/>
    <property type="match status" value="1"/>
</dbReference>
<dbReference type="SUPFAM" id="SSF54826">
    <property type="entry name" value="Enolase N-terminal domain-like"/>
    <property type="match status" value="1"/>
</dbReference>
<comment type="function">
    <text evidence="1">Catalyzes the regioselective dehydration of galactarate into 2-keto-D-threo-4,5-dihydroxyadipate ((2S,3R)-dihydroxy-5-oxohexanedioate). Is not active on other acid sugars.</text>
</comment>
<comment type="catalytic activity">
    <reaction evidence="1">
        <text>galactarate = (2S,3R)-dihydroxy-5-oxohexanedioate + H2O</text>
        <dbReference type="Rhea" id="RHEA:45808"/>
        <dbReference type="ChEBI" id="CHEBI:15377"/>
        <dbReference type="ChEBI" id="CHEBI:16537"/>
        <dbReference type="ChEBI" id="CHEBI:78267"/>
        <dbReference type="EC" id="4.2.1.158"/>
    </reaction>
</comment>
<comment type="cofactor">
    <cofactor evidence="1">
        <name>Mg(2+)</name>
        <dbReference type="ChEBI" id="CHEBI:18420"/>
    </cofactor>
    <text evidence="1">Binds 2 magnesium ions per subunit.</text>
</comment>
<comment type="biophysicochemical properties">
    <kinetics>
        <KM evidence="1">620 uM for galactarate</KM>
        <text>kcat is 6.8 sec(-1).</text>
    </kinetics>
</comment>
<comment type="miscellaneous">
    <text evidence="3">The enzyme product is the enantiomer of the product obtained in the galactarate dehydratase reaction catalyzed by STM3697; the enzymes thus differ in their regiochemistry of dehydration.</text>
</comment>
<comment type="similarity">
    <text evidence="2">Belongs to the mandelate racemase/muconate lactonizing enzyme family.</text>
</comment>
<organism>
    <name type="scientific">Oceanobacillus iheyensis (strain DSM 14371 / CIP 107618 / JCM 11309 / KCTC 3954 / HTE831)</name>
    <dbReference type="NCBI Taxonomy" id="221109"/>
    <lineage>
        <taxon>Bacteria</taxon>
        <taxon>Bacillati</taxon>
        <taxon>Bacillota</taxon>
        <taxon>Bacilli</taxon>
        <taxon>Bacillales</taxon>
        <taxon>Bacillaceae</taxon>
        <taxon>Oceanobacillus</taxon>
    </lineage>
</organism>
<sequence>MKITDLELHAVGIPRHTGFVNKHVIVKIHTDEGLTGIGEMSDFSHLPLYSVDLHDLKQGLLSILLGQNPFDLMKINKELTDNFPETMYYYEKGSFIRNGIDNALHDLCAKYLDISVSDFLGGRVKEKIKVCYPIFRHRFSEEVESNLDVVRQKLEQGFDVFRLYVGKNLDADEEFLSRVKEEFGSRVRIKSYDFSHLLNWKDAHRAIKRLTKYDLGLEMIESPAPRNDFDGLYQLRLKTDYPISEHVWSFKQQQEMIKKDAIDIFNISPVFIGGLTSAKKAAYAAEVASKDVVLGTTQELSVGTAAMAHLGCSLTNINHTSDPTGPELYVGDVVKNRVTYKDGYLYAPDRSVKGLGIELDESLLAKYQVPDLSWDNVTVHQLQDRTADTKS</sequence>
<evidence type="ECO:0000269" key="1">
    <source>
    </source>
</evidence>
<evidence type="ECO:0000305" key="2"/>
<evidence type="ECO:0000305" key="3">
    <source>
    </source>
</evidence>
<evidence type="ECO:0007829" key="4">
    <source>
        <dbReference type="PDB" id="3GD6"/>
    </source>
</evidence>
<evidence type="ECO:0007829" key="5">
    <source>
        <dbReference type="PDB" id="3HPF"/>
    </source>
</evidence>
<protein>
    <recommendedName>
        <fullName>Galactarate dehydratase (D-threo-forming)</fullName>
        <shortName>GalrD</shortName>
        <ecNumber evidence="1">4.2.1.158</ecNumber>
    </recommendedName>
    <alternativeName>
        <fullName>GalrD-II</fullName>
    </alternativeName>
</protein>
<proteinExistence type="evidence at protein level"/>
<accession>Q8EMJ9</accession>
<reference key="1">
    <citation type="journal article" date="2002" name="Nucleic Acids Res.">
        <title>Genome sequence of Oceanobacillus iheyensis isolated from the Iheya Ridge and its unexpected adaptive capabilities to extreme environments.</title>
        <authorList>
            <person name="Takami H."/>
            <person name="Takaki Y."/>
            <person name="Uchiyama I."/>
        </authorList>
    </citation>
    <scope>NUCLEOTIDE SEQUENCE [LARGE SCALE GENOMIC DNA]</scope>
    <source>
        <strain>DSM 14371 / CIP 107618 / JCM 11309 / KCTC 3954 / HTE831</strain>
    </source>
</reference>
<reference key="2">
    <citation type="journal article" date="2009" name="Biochemistry">
        <title>Computation-facilitated assignment of the function in the enolase superfamily: a regiochemically distinct galactarate dehydratase from Oceanobacillus iheyensis.</title>
        <authorList>
            <person name="Rakus J.F."/>
            <person name="Kalyanaraman C."/>
            <person name="Fedorov A.A."/>
            <person name="Fedorov E.V."/>
            <person name="Mills-Groninger F.P."/>
            <person name="Toro R."/>
            <person name="Bonanno J."/>
            <person name="Bain K."/>
            <person name="Sauder J.M."/>
            <person name="Burley S.K."/>
            <person name="Almo S.C."/>
            <person name="Jacobson M.P."/>
            <person name="Gerlt J.A."/>
        </authorList>
    </citation>
    <scope>X-RAY CRYSTALLOGRAPHY (1.80 ANGSTROMS) OF WILD-TYPE AND MUTANT PHE-90 IN COMPLEXES WITH MAGNESIUM; GALACTARATE AND (2S)-2-HYDROXYBUTANEDIOATE</scope>
    <scope>FUNCTION</scope>
    <scope>CATALYTIC ACTIVITY</scope>
    <scope>KINETIC PARAMETERS</scope>
    <scope>SUBSTRATE SPECIFICITY</scope>
    <scope>COFACTOR</scope>
    <scope>REGIOCHEMISTRY OF THE REACTION</scope>
    <scope>REACTION MECHANISM</scope>
    <scope>ACTIVE SITES</scope>
    <scope>MUTAGENESIS OF HIS-45; TYR-90; ARG-162 AND TYR-164</scope>
    <source>
        <strain>DSM 14371 / CIP 107618 / JCM 11309 / KCTC 3954 / HTE831</strain>
    </source>
</reference>
<reference key="3">
    <citation type="submission" date="2009-03" db="PDB data bank">
        <title>Crystal structure of divergent enolase from Oceanobacillus iheyensis complexed with phosphate.</title>
        <authorList>
            <consortium name="New York SGX Research Center for Structural Genomics (NYSGXRC)"/>
        </authorList>
    </citation>
    <scope>X-RAY CRYSTALLOGRAPHY (1.60 ANGSTROMS) IN COMPLEX WITH PHOSPHATE</scope>
    <source>
        <strain>DSM 14371 / CIP 107618 / JCM 11309 / KCTC 3954 / HTE831</strain>
    </source>
</reference>